<evidence type="ECO:0000255" key="1">
    <source>
        <dbReference type="HAMAP-Rule" id="MF_00057"/>
    </source>
</evidence>
<name>KDSB_SALSV</name>
<protein>
    <recommendedName>
        <fullName evidence="1">3-deoxy-manno-octulosonate cytidylyltransferase</fullName>
        <ecNumber evidence="1">2.7.7.38</ecNumber>
    </recommendedName>
    <alternativeName>
        <fullName evidence="1">CMP-2-keto-3-deoxyoctulosonic acid synthase</fullName>
        <shortName evidence="1">CKS</shortName>
        <shortName evidence="1">CMP-KDO synthase</shortName>
    </alternativeName>
</protein>
<sequence>MSFVVIIPARFSSTRLPGKPLVDINGKPMIVHVLERARESGAERIIVATDHEDVARAVEAAGGEVCMTRADHQSGTERLAEVVEKCGFSDDTVIVNVQGDEPMIPAVIIRQVAENLAQRQVGMATLAVPIHSAEEAFNPNAVKVVLDAEGYALYFSRATIPWDRDRFAKSLETVGDTCLRHLGIYGYRAGFIRRYVSWQPSPLEHIEMLEQLRVLWYGEKIHVAVAKAVPGTGVDTADDLERVRAEMR</sequence>
<dbReference type="EC" id="2.7.7.38" evidence="1"/>
<dbReference type="EMBL" id="CP001127">
    <property type="protein sequence ID" value="ACF91323.1"/>
    <property type="molecule type" value="Genomic_DNA"/>
</dbReference>
<dbReference type="RefSeq" id="WP_000011576.1">
    <property type="nucleotide sequence ID" value="NC_011094.1"/>
</dbReference>
<dbReference type="SMR" id="B4TRV0"/>
<dbReference type="KEGG" id="sew:SeSA_A1102"/>
<dbReference type="HOGENOM" id="CLU_065038_1_0_6"/>
<dbReference type="UniPathway" id="UPA00030"/>
<dbReference type="UniPathway" id="UPA00358">
    <property type="reaction ID" value="UER00476"/>
</dbReference>
<dbReference type="Proteomes" id="UP000001865">
    <property type="component" value="Chromosome"/>
</dbReference>
<dbReference type="GO" id="GO:0005829">
    <property type="term" value="C:cytosol"/>
    <property type="evidence" value="ECO:0007669"/>
    <property type="project" value="TreeGrafter"/>
</dbReference>
<dbReference type="GO" id="GO:0008690">
    <property type="term" value="F:3-deoxy-manno-octulosonate cytidylyltransferase activity"/>
    <property type="evidence" value="ECO:0007669"/>
    <property type="project" value="UniProtKB-UniRule"/>
</dbReference>
<dbReference type="GO" id="GO:0033468">
    <property type="term" value="P:CMP-keto-3-deoxy-D-manno-octulosonic acid biosynthetic process"/>
    <property type="evidence" value="ECO:0007669"/>
    <property type="project" value="UniProtKB-UniRule"/>
</dbReference>
<dbReference type="GO" id="GO:0009103">
    <property type="term" value="P:lipopolysaccharide biosynthetic process"/>
    <property type="evidence" value="ECO:0007669"/>
    <property type="project" value="UniProtKB-UniRule"/>
</dbReference>
<dbReference type="CDD" id="cd02517">
    <property type="entry name" value="CMP-KDO-Synthetase"/>
    <property type="match status" value="1"/>
</dbReference>
<dbReference type="FunFam" id="3.90.550.10:FF:000011">
    <property type="entry name" value="3-deoxy-manno-octulosonate cytidylyltransferase"/>
    <property type="match status" value="1"/>
</dbReference>
<dbReference type="Gene3D" id="3.90.550.10">
    <property type="entry name" value="Spore Coat Polysaccharide Biosynthesis Protein SpsA, Chain A"/>
    <property type="match status" value="1"/>
</dbReference>
<dbReference type="HAMAP" id="MF_00057">
    <property type="entry name" value="KdsB"/>
    <property type="match status" value="1"/>
</dbReference>
<dbReference type="InterPro" id="IPR003329">
    <property type="entry name" value="Cytidylyl_trans"/>
</dbReference>
<dbReference type="InterPro" id="IPR004528">
    <property type="entry name" value="KdsB"/>
</dbReference>
<dbReference type="InterPro" id="IPR029044">
    <property type="entry name" value="Nucleotide-diphossugar_trans"/>
</dbReference>
<dbReference type="NCBIfam" id="TIGR00466">
    <property type="entry name" value="kdsB"/>
    <property type="match status" value="1"/>
</dbReference>
<dbReference type="NCBIfam" id="NF003950">
    <property type="entry name" value="PRK05450.1-3"/>
    <property type="match status" value="1"/>
</dbReference>
<dbReference type="NCBIfam" id="NF003952">
    <property type="entry name" value="PRK05450.1-5"/>
    <property type="match status" value="1"/>
</dbReference>
<dbReference type="NCBIfam" id="NF009905">
    <property type="entry name" value="PRK13368.1"/>
    <property type="match status" value="1"/>
</dbReference>
<dbReference type="PANTHER" id="PTHR42866">
    <property type="entry name" value="3-DEOXY-MANNO-OCTULOSONATE CYTIDYLYLTRANSFERASE"/>
    <property type="match status" value="1"/>
</dbReference>
<dbReference type="PANTHER" id="PTHR42866:SF2">
    <property type="entry name" value="3-DEOXY-MANNO-OCTULOSONATE CYTIDYLYLTRANSFERASE, MITOCHONDRIAL"/>
    <property type="match status" value="1"/>
</dbReference>
<dbReference type="Pfam" id="PF02348">
    <property type="entry name" value="CTP_transf_3"/>
    <property type="match status" value="1"/>
</dbReference>
<dbReference type="SUPFAM" id="SSF53448">
    <property type="entry name" value="Nucleotide-diphospho-sugar transferases"/>
    <property type="match status" value="1"/>
</dbReference>
<keyword id="KW-0963">Cytoplasm</keyword>
<keyword id="KW-0448">Lipopolysaccharide biosynthesis</keyword>
<keyword id="KW-0548">Nucleotidyltransferase</keyword>
<keyword id="KW-0808">Transferase</keyword>
<organism>
    <name type="scientific">Salmonella schwarzengrund (strain CVM19633)</name>
    <dbReference type="NCBI Taxonomy" id="439843"/>
    <lineage>
        <taxon>Bacteria</taxon>
        <taxon>Pseudomonadati</taxon>
        <taxon>Pseudomonadota</taxon>
        <taxon>Gammaproteobacteria</taxon>
        <taxon>Enterobacterales</taxon>
        <taxon>Enterobacteriaceae</taxon>
        <taxon>Salmonella</taxon>
    </lineage>
</organism>
<proteinExistence type="inferred from homology"/>
<reference key="1">
    <citation type="journal article" date="2011" name="J. Bacteriol.">
        <title>Comparative genomics of 28 Salmonella enterica isolates: evidence for CRISPR-mediated adaptive sublineage evolution.</title>
        <authorList>
            <person name="Fricke W.F."/>
            <person name="Mammel M.K."/>
            <person name="McDermott P.F."/>
            <person name="Tartera C."/>
            <person name="White D.G."/>
            <person name="Leclerc J.E."/>
            <person name="Ravel J."/>
            <person name="Cebula T.A."/>
        </authorList>
    </citation>
    <scope>NUCLEOTIDE SEQUENCE [LARGE SCALE GENOMIC DNA]</scope>
    <source>
        <strain>CVM19633</strain>
    </source>
</reference>
<accession>B4TRV0</accession>
<comment type="function">
    <text evidence="1">Activates KDO (a required 8-carbon sugar) for incorporation into bacterial lipopolysaccharide in Gram-negative bacteria.</text>
</comment>
<comment type="catalytic activity">
    <reaction evidence="1">
        <text>3-deoxy-alpha-D-manno-oct-2-ulosonate + CTP = CMP-3-deoxy-beta-D-manno-octulosonate + diphosphate</text>
        <dbReference type="Rhea" id="RHEA:23448"/>
        <dbReference type="ChEBI" id="CHEBI:33019"/>
        <dbReference type="ChEBI" id="CHEBI:37563"/>
        <dbReference type="ChEBI" id="CHEBI:85986"/>
        <dbReference type="ChEBI" id="CHEBI:85987"/>
        <dbReference type="EC" id="2.7.7.38"/>
    </reaction>
</comment>
<comment type="pathway">
    <text evidence="1">Nucleotide-sugar biosynthesis; CMP-3-deoxy-D-manno-octulosonate biosynthesis; CMP-3-deoxy-D-manno-octulosonate from 3-deoxy-D-manno-octulosonate and CTP: step 1/1.</text>
</comment>
<comment type="pathway">
    <text evidence="1">Bacterial outer membrane biogenesis; lipopolysaccharide biosynthesis.</text>
</comment>
<comment type="subcellular location">
    <subcellularLocation>
        <location evidence="1">Cytoplasm</location>
    </subcellularLocation>
</comment>
<comment type="similarity">
    <text evidence="1">Belongs to the KdsB family.</text>
</comment>
<gene>
    <name evidence="1" type="primary">kdsB</name>
    <name type="ordered locus">SeSA_A1102</name>
</gene>
<feature type="chain" id="PRO_1000091906" description="3-deoxy-manno-octulosonate cytidylyltransferase">
    <location>
        <begin position="1"/>
        <end position="248"/>
    </location>
</feature>